<proteinExistence type="predicted"/>
<feature type="chain" id="PRO_0000050042" description="Uncharacterized protein YxxB">
    <location>
        <begin position="1"/>
        <end position="275"/>
    </location>
</feature>
<feature type="transmembrane region" description="Helical" evidence="1">
    <location>
        <begin position="25"/>
        <end position="45"/>
    </location>
</feature>
<feature type="transmembrane region" description="Helical" evidence="1">
    <location>
        <begin position="70"/>
        <end position="90"/>
    </location>
</feature>
<feature type="transmembrane region" description="Helical" evidence="1">
    <location>
        <begin position="107"/>
        <end position="127"/>
    </location>
</feature>
<feature type="transmembrane region" description="Helical" evidence="1">
    <location>
        <begin position="149"/>
        <end position="169"/>
    </location>
</feature>
<feature type="transmembrane region" description="Helical" evidence="1">
    <location>
        <begin position="203"/>
        <end position="223"/>
    </location>
</feature>
<feature type="transmembrane region" description="Helical" evidence="1">
    <location>
        <begin position="247"/>
        <end position="267"/>
    </location>
</feature>
<feature type="sequence conflict" description="In Ref. 4; CAA57660." evidence="2" ref="4">
    <original>M</original>
    <variation>S</variation>
    <location>
        <position position="190"/>
    </location>
</feature>
<feature type="sequence conflict" description="In Ref. 1; BAA08335 and 4; CAA57660." evidence="2" ref="1 4">
    <original>EK</original>
    <variation>RSKLWAGPRPERFSVS</variation>
    <location>
        <begin position="274"/>
        <end position="275"/>
    </location>
</feature>
<reference key="1">
    <citation type="journal article" date="1995" name="DNA Res.">
        <title>Cloning and sequencing of a 23-kb region of the Bacillus subtilis genome between the iol and hut operons.</title>
        <authorList>
            <person name="Yoshida K."/>
            <person name="Fujimyra M."/>
            <person name="Yanai N."/>
            <person name="Fujita Y."/>
        </authorList>
    </citation>
    <scope>NUCLEOTIDE SEQUENCE [GENOMIC DNA]</scope>
    <source>
        <strain>168 / BGSC1A1</strain>
    </source>
</reference>
<reference key="2">
    <citation type="journal article" date="1997" name="Nature">
        <title>The complete genome sequence of the Gram-positive bacterium Bacillus subtilis.</title>
        <authorList>
            <person name="Kunst F."/>
            <person name="Ogasawara N."/>
            <person name="Moszer I."/>
            <person name="Albertini A.M."/>
            <person name="Alloni G."/>
            <person name="Azevedo V."/>
            <person name="Bertero M.G."/>
            <person name="Bessieres P."/>
            <person name="Bolotin A."/>
            <person name="Borchert S."/>
            <person name="Borriss R."/>
            <person name="Boursier L."/>
            <person name="Brans A."/>
            <person name="Braun M."/>
            <person name="Brignell S.C."/>
            <person name="Bron S."/>
            <person name="Brouillet S."/>
            <person name="Bruschi C.V."/>
            <person name="Caldwell B."/>
            <person name="Capuano V."/>
            <person name="Carter N.M."/>
            <person name="Choi S.-K."/>
            <person name="Codani J.-J."/>
            <person name="Connerton I.F."/>
            <person name="Cummings N.J."/>
            <person name="Daniel R.A."/>
            <person name="Denizot F."/>
            <person name="Devine K.M."/>
            <person name="Duesterhoeft A."/>
            <person name="Ehrlich S.D."/>
            <person name="Emmerson P.T."/>
            <person name="Entian K.-D."/>
            <person name="Errington J."/>
            <person name="Fabret C."/>
            <person name="Ferrari E."/>
            <person name="Foulger D."/>
            <person name="Fritz C."/>
            <person name="Fujita M."/>
            <person name="Fujita Y."/>
            <person name="Fuma S."/>
            <person name="Galizzi A."/>
            <person name="Galleron N."/>
            <person name="Ghim S.-Y."/>
            <person name="Glaser P."/>
            <person name="Goffeau A."/>
            <person name="Golightly E.J."/>
            <person name="Grandi G."/>
            <person name="Guiseppi G."/>
            <person name="Guy B.J."/>
            <person name="Haga K."/>
            <person name="Haiech J."/>
            <person name="Harwood C.R."/>
            <person name="Henaut A."/>
            <person name="Hilbert H."/>
            <person name="Holsappel S."/>
            <person name="Hosono S."/>
            <person name="Hullo M.-F."/>
            <person name="Itaya M."/>
            <person name="Jones L.-M."/>
            <person name="Joris B."/>
            <person name="Karamata D."/>
            <person name="Kasahara Y."/>
            <person name="Klaerr-Blanchard M."/>
            <person name="Klein C."/>
            <person name="Kobayashi Y."/>
            <person name="Koetter P."/>
            <person name="Koningstein G."/>
            <person name="Krogh S."/>
            <person name="Kumano M."/>
            <person name="Kurita K."/>
            <person name="Lapidus A."/>
            <person name="Lardinois S."/>
            <person name="Lauber J."/>
            <person name="Lazarevic V."/>
            <person name="Lee S.-M."/>
            <person name="Levine A."/>
            <person name="Liu H."/>
            <person name="Masuda S."/>
            <person name="Mauel C."/>
            <person name="Medigue C."/>
            <person name="Medina N."/>
            <person name="Mellado R.P."/>
            <person name="Mizuno M."/>
            <person name="Moestl D."/>
            <person name="Nakai S."/>
            <person name="Noback M."/>
            <person name="Noone D."/>
            <person name="O'Reilly M."/>
            <person name="Ogawa K."/>
            <person name="Ogiwara A."/>
            <person name="Oudega B."/>
            <person name="Park S.-H."/>
            <person name="Parro V."/>
            <person name="Pohl T.M."/>
            <person name="Portetelle D."/>
            <person name="Porwollik S."/>
            <person name="Prescott A.M."/>
            <person name="Presecan E."/>
            <person name="Pujic P."/>
            <person name="Purnelle B."/>
            <person name="Rapoport G."/>
            <person name="Rey M."/>
            <person name="Reynolds S."/>
            <person name="Rieger M."/>
            <person name="Rivolta C."/>
            <person name="Rocha E."/>
            <person name="Roche B."/>
            <person name="Rose M."/>
            <person name="Sadaie Y."/>
            <person name="Sato T."/>
            <person name="Scanlan E."/>
            <person name="Schleich S."/>
            <person name="Schroeter R."/>
            <person name="Scoffone F."/>
            <person name="Sekiguchi J."/>
            <person name="Sekowska A."/>
            <person name="Seror S.J."/>
            <person name="Serror P."/>
            <person name="Shin B.-S."/>
            <person name="Soldo B."/>
            <person name="Sorokin A."/>
            <person name="Tacconi E."/>
            <person name="Takagi T."/>
            <person name="Takahashi H."/>
            <person name="Takemaru K."/>
            <person name="Takeuchi M."/>
            <person name="Tamakoshi A."/>
            <person name="Tanaka T."/>
            <person name="Terpstra P."/>
            <person name="Tognoni A."/>
            <person name="Tosato V."/>
            <person name="Uchiyama S."/>
            <person name="Vandenbol M."/>
            <person name="Vannier F."/>
            <person name="Vassarotti A."/>
            <person name="Viari A."/>
            <person name="Wambutt R."/>
            <person name="Wedler E."/>
            <person name="Wedler H."/>
            <person name="Weitzenegger T."/>
            <person name="Winters P."/>
            <person name="Wipat A."/>
            <person name="Yamamoto H."/>
            <person name="Yamane K."/>
            <person name="Yasumoto K."/>
            <person name="Yata K."/>
            <person name="Yoshida K."/>
            <person name="Yoshikawa H.-F."/>
            <person name="Zumstein E."/>
            <person name="Yoshikawa H."/>
            <person name="Danchin A."/>
        </authorList>
    </citation>
    <scope>NUCLEOTIDE SEQUENCE [LARGE SCALE GENOMIC DNA]</scope>
    <source>
        <strain>168</strain>
    </source>
</reference>
<reference key="3">
    <citation type="journal article" date="2009" name="Microbiology">
        <title>From a consortium sequence to a unified sequence: the Bacillus subtilis 168 reference genome a decade later.</title>
        <authorList>
            <person name="Barbe V."/>
            <person name="Cruveiller S."/>
            <person name="Kunst F."/>
            <person name="Lenoble P."/>
            <person name="Meurice G."/>
            <person name="Sekowska A."/>
            <person name="Vallenet D."/>
            <person name="Wang T."/>
            <person name="Moszer I."/>
            <person name="Medigue C."/>
            <person name="Danchin A."/>
        </authorList>
    </citation>
    <scope>SEQUENCE REVISION TO C-TERMINUS</scope>
</reference>
<reference key="4">
    <citation type="journal article" date="1996" name="J. Bacteriol.">
        <title>Dra-nupC-pdp operon of Bacillus subtilis: nucleotide sequence, induction by deoxyribonucleosides, and transcriptional regulation by the deoR-encoded DeoR repressor protein.</title>
        <authorList>
            <person name="Saxild H.H."/>
            <person name="Andersen L.N."/>
            <person name="Hammer K."/>
        </authorList>
    </citation>
    <scope>NUCLEOTIDE SEQUENCE [GENOMIC DNA] OF 180-275</scope>
    <source>
        <strain>168</strain>
    </source>
</reference>
<organism>
    <name type="scientific">Bacillus subtilis (strain 168)</name>
    <dbReference type="NCBI Taxonomy" id="224308"/>
    <lineage>
        <taxon>Bacteria</taxon>
        <taxon>Bacillati</taxon>
        <taxon>Bacillota</taxon>
        <taxon>Bacilli</taxon>
        <taxon>Bacillales</taxon>
        <taxon>Bacillaceae</taxon>
        <taxon>Bacillus</taxon>
    </lineage>
</organism>
<accession>P39139</accession>
<evidence type="ECO:0000255" key="1"/>
<evidence type="ECO:0000305" key="2"/>
<keyword id="KW-1003">Cell membrane</keyword>
<keyword id="KW-0472">Membrane</keyword>
<keyword id="KW-1185">Reference proteome</keyword>
<keyword id="KW-0812">Transmembrane</keyword>
<keyword id="KW-1133">Transmembrane helix</keyword>
<sequence>MAVKDRYMSKIKQETKPWIKRFGRLGYFAFGGVFILLGVLAFMTAAGAGRAKDSSGALQTLSRMPYGSLLLFFIGIGLIGYVIWMVLSAIKDTEGHGNSRRGLSRRIGNFFSAAVYTSIAWNALRFVFGQGDGGTSEQTWSAYVLAQPFGQWLTGLTGAGFIVFAIVQFMKGVRAAFMKEFDTSKMNKQMICITKNTGRAGNIARAIIFSAIGYFLIKTAMTADPDDTRGFDGALAELAQQPHGKLILSILALGLILYGMYAIMKGIYQHMTWEK</sequence>
<dbReference type="EMBL" id="D45912">
    <property type="protein sequence ID" value="BAA08335.1"/>
    <property type="molecule type" value="Genomic_DNA"/>
</dbReference>
<dbReference type="EMBL" id="AL009126">
    <property type="protein sequence ID" value="CAB15980.2"/>
    <property type="molecule type" value="Genomic_DNA"/>
</dbReference>
<dbReference type="EMBL" id="X82174">
    <property type="protein sequence ID" value="CAA57660.1"/>
    <property type="molecule type" value="Genomic_DNA"/>
</dbReference>
<dbReference type="PIR" id="G70082">
    <property type="entry name" value="G70082"/>
</dbReference>
<dbReference type="RefSeq" id="NP_391823.2">
    <property type="nucleotide sequence ID" value="NC_000964.3"/>
</dbReference>
<dbReference type="RefSeq" id="WP_003243667.1">
    <property type="nucleotide sequence ID" value="NZ_OZ025638.1"/>
</dbReference>
<dbReference type="RefSeq" id="WP_009968405.1">
    <property type="nucleotide sequence ID" value="NZ_CM000487.1"/>
</dbReference>
<dbReference type="SMR" id="P39139"/>
<dbReference type="FunCoup" id="P39139">
    <property type="interactions" value="3"/>
</dbReference>
<dbReference type="STRING" id="224308.BSU39440"/>
<dbReference type="PaxDb" id="224308-BSU39440"/>
<dbReference type="EnsemblBacteria" id="CAB15980">
    <property type="protein sequence ID" value="CAB15980"/>
    <property type="gene ID" value="BSU_39440"/>
</dbReference>
<dbReference type="GeneID" id="937547"/>
<dbReference type="KEGG" id="bsu:BSU39440"/>
<dbReference type="PATRIC" id="fig|224308.179.peg.4269"/>
<dbReference type="eggNOG" id="ENOG502Z854">
    <property type="taxonomic scope" value="Bacteria"/>
</dbReference>
<dbReference type="InParanoid" id="P39139"/>
<dbReference type="OrthoDB" id="5702018at2"/>
<dbReference type="PhylomeDB" id="P39139"/>
<dbReference type="BioCyc" id="BSUB:BSU39440-MONOMER"/>
<dbReference type="Proteomes" id="UP000001570">
    <property type="component" value="Chromosome"/>
</dbReference>
<dbReference type="GO" id="GO:0005886">
    <property type="term" value="C:plasma membrane"/>
    <property type="evidence" value="ECO:0007669"/>
    <property type="project" value="UniProtKB-SubCell"/>
</dbReference>
<dbReference type="InterPro" id="IPR009597">
    <property type="entry name" value="DUF1206"/>
</dbReference>
<dbReference type="Pfam" id="PF06724">
    <property type="entry name" value="DUF1206"/>
    <property type="match status" value="3"/>
</dbReference>
<protein>
    <recommendedName>
        <fullName>Uncharacterized protein YxxB</fullName>
    </recommendedName>
</protein>
<comment type="subcellular location">
    <subcellularLocation>
        <location evidence="2">Cell membrane</location>
        <topology evidence="2">Multi-pass membrane protein</topology>
    </subcellularLocation>
</comment>
<name>YXXB_BACSU</name>
<gene>
    <name type="primary">yxxB</name>
    <name type="synonym">LP6B</name>
    <name type="ordered locus">BSU39440</name>
</gene>